<evidence type="ECO:0000255" key="1">
    <source>
        <dbReference type="HAMAP-Rule" id="MF_01342"/>
    </source>
</evidence>
<evidence type="ECO:0000305" key="2"/>
<protein>
    <recommendedName>
        <fullName evidence="1">Large ribosomal subunit protein uL16c</fullName>
    </recommendedName>
    <alternativeName>
        <fullName evidence="2">50S ribosomal protein L16, chloroplastic</fullName>
    </alternativeName>
</protein>
<geneLocation type="chloroplast"/>
<dbReference type="EMBL" id="DQ422812">
    <property type="protein sequence ID" value="ABD62229.2"/>
    <property type="molecule type" value="Genomic_DNA"/>
</dbReference>
<dbReference type="RefSeq" id="YP_001019088.1">
    <property type="nucleotide sequence ID" value="NC_008822.1"/>
</dbReference>
<dbReference type="SMR" id="Q19VB1"/>
<dbReference type="GeneID" id="4783186"/>
<dbReference type="GO" id="GO:0009507">
    <property type="term" value="C:chloroplast"/>
    <property type="evidence" value="ECO:0007669"/>
    <property type="project" value="UniProtKB-SubCell"/>
</dbReference>
<dbReference type="GO" id="GO:0005762">
    <property type="term" value="C:mitochondrial large ribosomal subunit"/>
    <property type="evidence" value="ECO:0007669"/>
    <property type="project" value="TreeGrafter"/>
</dbReference>
<dbReference type="GO" id="GO:0019843">
    <property type="term" value="F:rRNA binding"/>
    <property type="evidence" value="ECO:0007669"/>
    <property type="project" value="InterPro"/>
</dbReference>
<dbReference type="GO" id="GO:0003735">
    <property type="term" value="F:structural constituent of ribosome"/>
    <property type="evidence" value="ECO:0007669"/>
    <property type="project" value="InterPro"/>
</dbReference>
<dbReference type="GO" id="GO:0032543">
    <property type="term" value="P:mitochondrial translation"/>
    <property type="evidence" value="ECO:0007669"/>
    <property type="project" value="TreeGrafter"/>
</dbReference>
<dbReference type="CDD" id="cd01433">
    <property type="entry name" value="Ribosomal_L16_L10e"/>
    <property type="match status" value="1"/>
</dbReference>
<dbReference type="FunFam" id="3.90.1170.10:FF:000001">
    <property type="entry name" value="50S ribosomal protein L16"/>
    <property type="match status" value="1"/>
</dbReference>
<dbReference type="Gene3D" id="3.90.1170.10">
    <property type="entry name" value="Ribosomal protein L10e/L16"/>
    <property type="match status" value="1"/>
</dbReference>
<dbReference type="HAMAP" id="MF_01342">
    <property type="entry name" value="Ribosomal_uL16"/>
    <property type="match status" value="1"/>
</dbReference>
<dbReference type="InterPro" id="IPR047873">
    <property type="entry name" value="Ribosomal_uL16"/>
</dbReference>
<dbReference type="InterPro" id="IPR000114">
    <property type="entry name" value="Ribosomal_uL16_bact-type"/>
</dbReference>
<dbReference type="InterPro" id="IPR020798">
    <property type="entry name" value="Ribosomal_uL16_CS"/>
</dbReference>
<dbReference type="InterPro" id="IPR016180">
    <property type="entry name" value="Ribosomal_uL16_dom"/>
</dbReference>
<dbReference type="InterPro" id="IPR036920">
    <property type="entry name" value="Ribosomal_uL16_sf"/>
</dbReference>
<dbReference type="NCBIfam" id="TIGR01164">
    <property type="entry name" value="rplP_bact"/>
    <property type="match status" value="1"/>
</dbReference>
<dbReference type="PANTHER" id="PTHR12220">
    <property type="entry name" value="50S/60S RIBOSOMAL PROTEIN L16"/>
    <property type="match status" value="1"/>
</dbReference>
<dbReference type="PANTHER" id="PTHR12220:SF13">
    <property type="entry name" value="LARGE RIBOSOMAL SUBUNIT PROTEIN UL16M"/>
    <property type="match status" value="1"/>
</dbReference>
<dbReference type="Pfam" id="PF00252">
    <property type="entry name" value="Ribosomal_L16"/>
    <property type="match status" value="1"/>
</dbReference>
<dbReference type="PRINTS" id="PR00060">
    <property type="entry name" value="RIBOSOMALL16"/>
</dbReference>
<dbReference type="SUPFAM" id="SSF54686">
    <property type="entry name" value="Ribosomal protein L16p/L10e"/>
    <property type="match status" value="1"/>
</dbReference>
<dbReference type="PROSITE" id="PS00586">
    <property type="entry name" value="RIBOSOMAL_L16_1"/>
    <property type="match status" value="1"/>
</dbReference>
<dbReference type="PROSITE" id="PS00701">
    <property type="entry name" value="RIBOSOMAL_L16_2"/>
    <property type="match status" value="1"/>
</dbReference>
<keyword id="KW-0150">Chloroplast</keyword>
<keyword id="KW-0934">Plastid</keyword>
<keyword id="KW-0687">Ribonucleoprotein</keyword>
<keyword id="KW-0689">Ribosomal protein</keyword>
<proteinExistence type="inferred from homology"/>
<name>RK16_CHLAT</name>
<feature type="chain" id="PRO_0000354623" description="Large ribosomal subunit protein uL16c">
    <location>
        <begin position="1"/>
        <end position="143"/>
    </location>
</feature>
<reference key="1">
    <citation type="journal article" date="2007" name="BMC Biol.">
        <title>A clade uniting the green algae Mesostigma viride and Chlorokybus atmophyticus represents the deepest branch of the Streptophyta in chloroplast genome-based phylogenies.</title>
        <authorList>
            <person name="Lemieux C."/>
            <person name="Otis C."/>
            <person name="Turmel M."/>
        </authorList>
    </citation>
    <scope>NUCLEOTIDE SEQUENCE [LARGE SCALE GENOMIC DNA]</scope>
    <source>
        <strain>SAG 48.80</strain>
    </source>
</reference>
<comment type="subunit">
    <text evidence="1">Part of the 50S ribosomal subunit.</text>
</comment>
<comment type="subcellular location">
    <subcellularLocation>
        <location>Plastid</location>
        <location>Chloroplast</location>
    </subcellularLocation>
</comment>
<comment type="similarity">
    <text evidence="1">Belongs to the universal ribosomal protein uL16 family.</text>
</comment>
<gene>
    <name evidence="1" type="primary">rpl16</name>
</gene>
<sequence>MLSPRRTKFRKHHRGRMKGLAARGNQISFGDFALRALEPAWITSRQIESGRRAMTRYAKRGGKIWIRIFPDKPVTMRPAETRMGSGKGSPEYWVAVVKPGKILYEMKGVSETVARAAMRIASYKMPIKTQFITRIETKAPIVE</sequence>
<accession>Q19VB1</accession>
<organism>
    <name type="scientific">Chlorokybus atmophyticus</name>
    <name type="common">Soil alga</name>
    <dbReference type="NCBI Taxonomy" id="3144"/>
    <lineage>
        <taxon>Eukaryota</taxon>
        <taxon>Viridiplantae</taxon>
        <taxon>Streptophyta</taxon>
        <taxon>Chlorokybophyceae</taxon>
        <taxon>Chlorokybales</taxon>
        <taxon>Chlorokybaceae</taxon>
        <taxon>Chlorokybus</taxon>
    </lineage>
</organism>